<keyword id="KW-0150">Chloroplast</keyword>
<keyword id="KW-0472">Membrane</keyword>
<keyword id="KW-0602">Photosynthesis</keyword>
<keyword id="KW-0934">Plastid</keyword>
<keyword id="KW-1185">Reference proteome</keyword>
<keyword id="KW-0677">Repeat</keyword>
<keyword id="KW-0793">Thylakoid</keyword>
<keyword id="KW-0802">TPR repeat</keyword>
<sequence>MPRSRTNGNFIDKTFSIVADILLRVIPTTSGEKEAFTYYRDGMSAQSEGNYAEALQNYYEAMRLEIDPYDRSYILYNIGLIHTSNGEHTKALEYYFRALERNPFLPQAFNNMAVICHYRGEQAIQQGDSEIAEAWFDQAAEYWKQAIALTPGNYIEAHNWLKITRRFE</sequence>
<proteinExistence type="inferred from homology"/>
<dbReference type="EMBL" id="DQ231562">
    <property type="protein sequence ID" value="ABB90042.1"/>
    <property type="molecule type" value="Genomic_DNA"/>
</dbReference>
<dbReference type="EMBL" id="DQ386163">
    <property type="protein sequence ID" value="ABD47058.1"/>
    <property type="molecule type" value="Genomic_DNA"/>
</dbReference>
<dbReference type="RefSeq" id="YP_635640.1">
    <property type="nucleotide sequence ID" value="NC_008096.2"/>
</dbReference>
<dbReference type="SMR" id="Q2VEH6"/>
<dbReference type="FunCoup" id="Q2VEH6">
    <property type="interactions" value="24"/>
</dbReference>
<dbReference type="STRING" id="4113.Q2VEH6"/>
<dbReference type="GeneID" id="4099970"/>
<dbReference type="KEGG" id="sot:4099970"/>
<dbReference type="InParanoid" id="Q2VEH6"/>
<dbReference type="OrthoDB" id="431027at2759"/>
<dbReference type="Proteomes" id="UP000011115">
    <property type="component" value="Unassembled WGS sequence"/>
</dbReference>
<dbReference type="GO" id="GO:0009535">
    <property type="term" value="C:chloroplast thylakoid membrane"/>
    <property type="evidence" value="ECO:0007669"/>
    <property type="project" value="UniProtKB-SubCell"/>
</dbReference>
<dbReference type="GO" id="GO:0048564">
    <property type="term" value="P:photosystem I assembly"/>
    <property type="evidence" value="ECO:0000318"/>
    <property type="project" value="GO_Central"/>
</dbReference>
<dbReference type="FunFam" id="1.25.40.10:FF:000004">
    <property type="entry name" value="Photosystem I assembly protein Ycf3"/>
    <property type="match status" value="1"/>
</dbReference>
<dbReference type="Gene3D" id="1.25.40.10">
    <property type="entry name" value="Tetratricopeptide repeat domain"/>
    <property type="match status" value="1"/>
</dbReference>
<dbReference type="HAMAP" id="MF_00439">
    <property type="entry name" value="Ycf3"/>
    <property type="match status" value="1"/>
</dbReference>
<dbReference type="InterPro" id="IPR022818">
    <property type="entry name" value="PSI_Ycf3_assembly"/>
</dbReference>
<dbReference type="InterPro" id="IPR011990">
    <property type="entry name" value="TPR-like_helical_dom_sf"/>
</dbReference>
<dbReference type="InterPro" id="IPR019734">
    <property type="entry name" value="TPR_rpt"/>
</dbReference>
<dbReference type="InterPro" id="IPR051685">
    <property type="entry name" value="Ycf3/AcsC/BcsC/TPR_MFPF"/>
</dbReference>
<dbReference type="NCBIfam" id="NF002725">
    <property type="entry name" value="PRK02603.1"/>
    <property type="match status" value="1"/>
</dbReference>
<dbReference type="PANTHER" id="PTHR44943">
    <property type="entry name" value="CELLULOSE SYNTHASE OPERON PROTEIN C"/>
    <property type="match status" value="1"/>
</dbReference>
<dbReference type="PANTHER" id="PTHR44943:SF8">
    <property type="entry name" value="TPR REPEAT-CONTAINING PROTEIN MJ0263"/>
    <property type="match status" value="1"/>
</dbReference>
<dbReference type="Pfam" id="PF00515">
    <property type="entry name" value="TPR_1"/>
    <property type="match status" value="1"/>
</dbReference>
<dbReference type="SMART" id="SM00028">
    <property type="entry name" value="TPR"/>
    <property type="match status" value="3"/>
</dbReference>
<dbReference type="SUPFAM" id="SSF48452">
    <property type="entry name" value="TPR-like"/>
    <property type="match status" value="1"/>
</dbReference>
<dbReference type="PROSITE" id="PS50005">
    <property type="entry name" value="TPR"/>
    <property type="match status" value="3"/>
</dbReference>
<dbReference type="PROSITE" id="PS50293">
    <property type="entry name" value="TPR_REGION"/>
    <property type="match status" value="2"/>
</dbReference>
<comment type="function">
    <text evidence="1">Essential for the assembly of the photosystem I (PSI) complex. May act as a chaperone-like factor to guide the assembly of the PSI subunits.</text>
</comment>
<comment type="subcellular location">
    <subcellularLocation>
        <location evidence="1">Plastid</location>
        <location evidence="1">Chloroplast thylakoid membrane</location>
        <topology evidence="1">Peripheral membrane protein</topology>
    </subcellularLocation>
</comment>
<comment type="similarity">
    <text evidence="1">Belongs to the Ycf3 family.</text>
</comment>
<evidence type="ECO:0000255" key="1">
    <source>
        <dbReference type="HAMAP-Rule" id="MF_00439"/>
    </source>
</evidence>
<organism>
    <name type="scientific">Solanum tuberosum</name>
    <name type="common">Potato</name>
    <dbReference type="NCBI Taxonomy" id="4113"/>
    <lineage>
        <taxon>Eukaryota</taxon>
        <taxon>Viridiplantae</taxon>
        <taxon>Streptophyta</taxon>
        <taxon>Embryophyta</taxon>
        <taxon>Tracheophyta</taxon>
        <taxon>Spermatophyta</taxon>
        <taxon>Magnoliopsida</taxon>
        <taxon>eudicotyledons</taxon>
        <taxon>Gunneridae</taxon>
        <taxon>Pentapetalae</taxon>
        <taxon>asterids</taxon>
        <taxon>lamiids</taxon>
        <taxon>Solanales</taxon>
        <taxon>Solanaceae</taxon>
        <taxon>Solanoideae</taxon>
        <taxon>Solaneae</taxon>
        <taxon>Solanum</taxon>
    </lineage>
</organism>
<geneLocation type="chloroplast"/>
<reference key="1">
    <citation type="journal article" date="2006" name="Plant Cell Rep.">
        <title>The complete chloroplast genome sequences of Solanum tuberosum and comparative analysis with Solanaceae species identified the presence of a 241-bp deletion in cultivated potato chloroplast DNA sequence.</title>
        <authorList>
            <person name="Chung H.-J."/>
            <person name="Jung J.D."/>
            <person name="Park H.-W."/>
            <person name="Kim J.-H."/>
            <person name="Cha H.W."/>
            <person name="Min S.R."/>
            <person name="Jeong W.-J."/>
            <person name="Liu J.R."/>
        </authorList>
    </citation>
    <scope>NUCLEOTIDE SEQUENCE [LARGE SCALE GENOMIC DNA]</scope>
    <source>
        <strain>cv. Desiree</strain>
    </source>
</reference>
<reference key="2">
    <citation type="submission" date="2006-02" db="EMBL/GenBank/DDBJ databases">
        <title>Complete chloroplast genome sequences of Solanum tuberosum cultivar Desiree and comparative analyses with other Solanaceae genomes.</title>
        <authorList>
            <person name="Gargano D."/>
            <person name="Scotti N."/>
            <person name="Vezzi A."/>
            <person name="Bilardi A."/>
            <person name="Valle G."/>
            <person name="Grillo S."/>
            <person name="Cardi T."/>
        </authorList>
    </citation>
    <scope>NUCLEOTIDE SEQUENCE [LARGE SCALE GENOMIC DNA]</scope>
    <source>
        <strain>cv. Desiree</strain>
    </source>
</reference>
<feature type="chain" id="PRO_0000275638" description="Photosystem I assembly protein Ycf3">
    <location>
        <begin position="1"/>
        <end position="168"/>
    </location>
</feature>
<feature type="repeat" description="TPR 1">
    <location>
        <begin position="35"/>
        <end position="68"/>
    </location>
</feature>
<feature type="repeat" description="TPR 2">
    <location>
        <begin position="72"/>
        <end position="105"/>
    </location>
</feature>
<feature type="repeat" description="TPR 3">
    <location>
        <begin position="120"/>
        <end position="153"/>
    </location>
</feature>
<name>YCF3_SOLTU</name>
<accession>Q2VEH6</accession>
<protein>
    <recommendedName>
        <fullName evidence="1">Photosystem I assembly protein Ycf3</fullName>
    </recommendedName>
</protein>
<gene>
    <name evidence="1" type="primary">ycf3</name>
</gene>